<reference key="1">
    <citation type="journal article" date="2007" name="PLoS Genet.">
        <title>Patterns and implications of gene gain and loss in the evolution of Prochlorococcus.</title>
        <authorList>
            <person name="Kettler G.C."/>
            <person name="Martiny A.C."/>
            <person name="Huang K."/>
            <person name="Zucker J."/>
            <person name="Coleman M.L."/>
            <person name="Rodrigue S."/>
            <person name="Chen F."/>
            <person name="Lapidus A."/>
            <person name="Ferriera S."/>
            <person name="Johnson J."/>
            <person name="Steglich C."/>
            <person name="Church G.M."/>
            <person name="Richardson P."/>
            <person name="Chisholm S.W."/>
        </authorList>
    </citation>
    <scope>NUCLEOTIDE SEQUENCE [LARGE SCALE GENOMIC DNA]</scope>
    <source>
        <strain>NATL2A</strain>
    </source>
</reference>
<name>RSMG_PROMT</name>
<protein>
    <recommendedName>
        <fullName evidence="1">Ribosomal RNA small subunit methyltransferase G</fullName>
        <ecNumber evidence="1">2.1.1.-</ecNumber>
    </recommendedName>
    <alternativeName>
        <fullName evidence="1">16S rRNA 7-methylguanosine methyltransferase</fullName>
        <shortName evidence="1">16S rRNA m7G methyltransferase</shortName>
    </alternativeName>
</protein>
<gene>
    <name evidence="1" type="primary">rsmG</name>
    <name type="ordered locus">PMN2A_1005</name>
</gene>
<dbReference type="EC" id="2.1.1.-" evidence="1"/>
<dbReference type="EMBL" id="CP000095">
    <property type="protein sequence ID" value="AAZ58495.1"/>
    <property type="status" value="ALT_INIT"/>
    <property type="molecule type" value="Genomic_DNA"/>
</dbReference>
<dbReference type="RefSeq" id="WP_041711057.1">
    <property type="nucleotide sequence ID" value="NC_007335.2"/>
</dbReference>
<dbReference type="SMR" id="Q46J33"/>
<dbReference type="STRING" id="59920.PMN2A_1005"/>
<dbReference type="KEGG" id="pmn:PMN2A_1005"/>
<dbReference type="HOGENOM" id="CLU_065341_0_2_3"/>
<dbReference type="OrthoDB" id="9808773at2"/>
<dbReference type="PhylomeDB" id="Q46J33"/>
<dbReference type="Proteomes" id="UP000002535">
    <property type="component" value="Chromosome"/>
</dbReference>
<dbReference type="GO" id="GO:0005829">
    <property type="term" value="C:cytosol"/>
    <property type="evidence" value="ECO:0007669"/>
    <property type="project" value="TreeGrafter"/>
</dbReference>
<dbReference type="GO" id="GO:0070043">
    <property type="term" value="F:rRNA (guanine-N7-)-methyltransferase activity"/>
    <property type="evidence" value="ECO:0007669"/>
    <property type="project" value="UniProtKB-UniRule"/>
</dbReference>
<dbReference type="FunFam" id="3.40.50.150:FF:000041">
    <property type="entry name" value="Ribosomal RNA small subunit methyltransferase G"/>
    <property type="match status" value="1"/>
</dbReference>
<dbReference type="Gene3D" id="3.40.50.150">
    <property type="entry name" value="Vaccinia Virus protein VP39"/>
    <property type="match status" value="1"/>
</dbReference>
<dbReference type="HAMAP" id="MF_00074">
    <property type="entry name" value="16SrRNA_methyltr_G"/>
    <property type="match status" value="1"/>
</dbReference>
<dbReference type="InterPro" id="IPR003682">
    <property type="entry name" value="rRNA_ssu_MeTfrase_G"/>
</dbReference>
<dbReference type="InterPro" id="IPR029063">
    <property type="entry name" value="SAM-dependent_MTases_sf"/>
</dbReference>
<dbReference type="NCBIfam" id="TIGR00138">
    <property type="entry name" value="rsmG_gidB"/>
    <property type="match status" value="1"/>
</dbReference>
<dbReference type="PANTHER" id="PTHR31760">
    <property type="entry name" value="S-ADENOSYL-L-METHIONINE-DEPENDENT METHYLTRANSFERASES SUPERFAMILY PROTEIN"/>
    <property type="match status" value="1"/>
</dbReference>
<dbReference type="PANTHER" id="PTHR31760:SF0">
    <property type="entry name" value="S-ADENOSYL-L-METHIONINE-DEPENDENT METHYLTRANSFERASES SUPERFAMILY PROTEIN"/>
    <property type="match status" value="1"/>
</dbReference>
<dbReference type="Pfam" id="PF02527">
    <property type="entry name" value="GidB"/>
    <property type="match status" value="1"/>
</dbReference>
<dbReference type="PIRSF" id="PIRSF003078">
    <property type="entry name" value="GidB"/>
    <property type="match status" value="1"/>
</dbReference>
<dbReference type="SUPFAM" id="SSF53335">
    <property type="entry name" value="S-adenosyl-L-methionine-dependent methyltransferases"/>
    <property type="match status" value="1"/>
</dbReference>
<sequence length="248" mass="28076">MSTDKKNRTASHLMIWNELKWAPSEKQLAQFIHLQELLKEWNKKINLTRLVDGDDFWTAQVCDSLLPLYEELQHPEVSHKYIDIGSGCGFPGIAIAIAMPNSNITLLDSSSKKTTFLKEVSKEIGLDSRIKVVTERAEEAGRNPIFRSNFDYAIARAVASANVVAEYLVPFLNSTGQALIFKGSWSETEQQILKKALAELNAEIQRTHEFILPNNRGIRNIIRINSTNKCPHQYPRSIGKPKKQPLGY</sequence>
<proteinExistence type="inferred from homology"/>
<feature type="chain" id="PRO_0000342934" description="Ribosomal RNA small subunit methyltransferase G">
    <location>
        <begin position="1"/>
        <end position="248"/>
    </location>
</feature>
<feature type="binding site" evidence="1">
    <location>
        <position position="85"/>
    </location>
    <ligand>
        <name>S-adenosyl-L-methionine</name>
        <dbReference type="ChEBI" id="CHEBI:59789"/>
    </ligand>
</feature>
<feature type="binding site" evidence="1">
    <location>
        <position position="90"/>
    </location>
    <ligand>
        <name>S-adenosyl-L-methionine</name>
        <dbReference type="ChEBI" id="CHEBI:59789"/>
    </ligand>
</feature>
<feature type="binding site" evidence="1">
    <location>
        <begin position="108"/>
        <end position="110"/>
    </location>
    <ligand>
        <name>S-adenosyl-L-methionine</name>
        <dbReference type="ChEBI" id="CHEBI:59789"/>
    </ligand>
</feature>
<feature type="binding site" evidence="1">
    <location>
        <begin position="137"/>
        <end position="138"/>
    </location>
    <ligand>
        <name>S-adenosyl-L-methionine</name>
        <dbReference type="ChEBI" id="CHEBI:59789"/>
    </ligand>
</feature>
<feature type="binding site" evidence="1">
    <location>
        <position position="156"/>
    </location>
    <ligand>
        <name>S-adenosyl-L-methionine</name>
        <dbReference type="ChEBI" id="CHEBI:59789"/>
    </ligand>
</feature>
<organism>
    <name type="scientific">Prochlorococcus marinus (strain NATL2A)</name>
    <dbReference type="NCBI Taxonomy" id="59920"/>
    <lineage>
        <taxon>Bacteria</taxon>
        <taxon>Bacillati</taxon>
        <taxon>Cyanobacteriota</taxon>
        <taxon>Cyanophyceae</taxon>
        <taxon>Synechococcales</taxon>
        <taxon>Prochlorococcaceae</taxon>
        <taxon>Prochlorococcus</taxon>
    </lineage>
</organism>
<comment type="function">
    <text evidence="1">Specifically methylates the N7 position of a guanine in 16S rRNA.</text>
</comment>
<comment type="subcellular location">
    <subcellularLocation>
        <location evidence="1">Cytoplasm</location>
    </subcellularLocation>
</comment>
<comment type="similarity">
    <text evidence="1">Belongs to the methyltransferase superfamily. RNA methyltransferase RsmG family.</text>
</comment>
<comment type="sequence caution" evidence="2">
    <conflict type="erroneous initiation">
        <sequence resource="EMBL-CDS" id="AAZ58495"/>
    </conflict>
</comment>
<accession>Q46J33</accession>
<evidence type="ECO:0000255" key="1">
    <source>
        <dbReference type="HAMAP-Rule" id="MF_00074"/>
    </source>
</evidence>
<evidence type="ECO:0000305" key="2"/>
<keyword id="KW-0963">Cytoplasm</keyword>
<keyword id="KW-0489">Methyltransferase</keyword>
<keyword id="KW-1185">Reference proteome</keyword>
<keyword id="KW-0698">rRNA processing</keyword>
<keyword id="KW-0949">S-adenosyl-L-methionine</keyword>
<keyword id="KW-0808">Transferase</keyword>